<dbReference type="EC" id="3.1.2.-" evidence="1"/>
<dbReference type="EC" id="3.5.1.-" evidence="1"/>
<dbReference type="EC" id="3.5.1.124" evidence="1"/>
<dbReference type="EMBL" id="CU928162">
    <property type="protein sequence ID" value="CAR08419.2"/>
    <property type="molecule type" value="Genomic_DNA"/>
</dbReference>
<dbReference type="RefSeq" id="WP_000218214.1">
    <property type="nucleotide sequence ID" value="NC_011745.1"/>
</dbReference>
<dbReference type="SMR" id="B7MWF3"/>
<dbReference type="MEROPS" id="C56.006"/>
<dbReference type="GeneID" id="75205795"/>
<dbReference type="KEGG" id="ecq:ECED1_2232"/>
<dbReference type="HOGENOM" id="CLU_066933_0_0_6"/>
<dbReference type="Proteomes" id="UP000000748">
    <property type="component" value="Chromosome"/>
</dbReference>
<dbReference type="GO" id="GO:0005737">
    <property type="term" value="C:cytoplasm"/>
    <property type="evidence" value="ECO:0007669"/>
    <property type="project" value="UniProtKB-SubCell"/>
</dbReference>
<dbReference type="GO" id="GO:0019172">
    <property type="term" value="F:glyoxalase III activity"/>
    <property type="evidence" value="ECO:0007669"/>
    <property type="project" value="TreeGrafter"/>
</dbReference>
<dbReference type="GO" id="GO:0036524">
    <property type="term" value="F:protein deglycase activity"/>
    <property type="evidence" value="ECO:0007669"/>
    <property type="project" value="UniProtKB-UniRule"/>
</dbReference>
<dbReference type="GO" id="GO:0016790">
    <property type="term" value="F:thiolester hydrolase activity"/>
    <property type="evidence" value="ECO:0007669"/>
    <property type="project" value="UniProtKB-UniRule"/>
</dbReference>
<dbReference type="GO" id="GO:0008270">
    <property type="term" value="F:zinc ion binding"/>
    <property type="evidence" value="ECO:0007669"/>
    <property type="project" value="UniProtKB-UniRule"/>
</dbReference>
<dbReference type="GO" id="GO:0006281">
    <property type="term" value="P:DNA repair"/>
    <property type="evidence" value="ECO:0007669"/>
    <property type="project" value="UniProtKB-UniRule"/>
</dbReference>
<dbReference type="GO" id="GO:0019243">
    <property type="term" value="P:methylglyoxal catabolic process to D-lactate via S-lactoyl-glutathione"/>
    <property type="evidence" value="ECO:0007669"/>
    <property type="project" value="TreeGrafter"/>
</dbReference>
<dbReference type="GO" id="GO:0030091">
    <property type="term" value="P:protein repair"/>
    <property type="evidence" value="ECO:0007669"/>
    <property type="project" value="UniProtKB-UniRule"/>
</dbReference>
<dbReference type="FunFam" id="3.40.50.880:FF:000026">
    <property type="entry name" value="Protein/nucleic acid deglycase HchA"/>
    <property type="match status" value="1"/>
</dbReference>
<dbReference type="Gene3D" id="3.40.50.880">
    <property type="match status" value="1"/>
</dbReference>
<dbReference type="HAMAP" id="MF_01046">
    <property type="entry name" value="Deglycase_HchA"/>
    <property type="match status" value="1"/>
</dbReference>
<dbReference type="InterPro" id="IPR029062">
    <property type="entry name" value="Class_I_gatase-like"/>
</dbReference>
<dbReference type="InterPro" id="IPR017283">
    <property type="entry name" value="HchA"/>
</dbReference>
<dbReference type="InterPro" id="IPR050325">
    <property type="entry name" value="Prot/Nucl_acid_deglycase"/>
</dbReference>
<dbReference type="NCBIfam" id="NF003168">
    <property type="entry name" value="PRK04155.1"/>
    <property type="match status" value="1"/>
</dbReference>
<dbReference type="PANTHER" id="PTHR48094">
    <property type="entry name" value="PROTEIN/NUCLEIC ACID DEGLYCASE DJ-1-RELATED"/>
    <property type="match status" value="1"/>
</dbReference>
<dbReference type="PANTHER" id="PTHR48094:SF20">
    <property type="entry name" value="PROTEIN_NUCLEIC ACID DEGLYCASE 1"/>
    <property type="match status" value="1"/>
</dbReference>
<dbReference type="PIRSF" id="PIRSF037798">
    <property type="entry name" value="Chaperone_HchA"/>
    <property type="match status" value="1"/>
</dbReference>
<dbReference type="SUPFAM" id="SSF52317">
    <property type="entry name" value="Class I glutamine amidotransferase-like"/>
    <property type="match status" value="1"/>
</dbReference>
<feature type="chain" id="PRO_1000149604" description="Protein/nucleic acid deglycase HchA">
    <location>
        <begin position="1"/>
        <end position="283"/>
    </location>
</feature>
<feature type="active site" description="Nucleophile" evidence="1">
    <location>
        <position position="185"/>
    </location>
</feature>
<feature type="binding site" evidence="1">
    <location>
        <position position="86"/>
    </location>
    <ligand>
        <name>Zn(2+)</name>
        <dbReference type="ChEBI" id="CHEBI:29105"/>
    </ligand>
</feature>
<feature type="binding site" evidence="1">
    <location>
        <position position="91"/>
    </location>
    <ligand>
        <name>Zn(2+)</name>
        <dbReference type="ChEBI" id="CHEBI:29105"/>
    </ligand>
</feature>
<feature type="binding site" evidence="1">
    <location>
        <position position="123"/>
    </location>
    <ligand>
        <name>Zn(2+)</name>
        <dbReference type="ChEBI" id="CHEBI:29105"/>
    </ligand>
</feature>
<reference key="1">
    <citation type="journal article" date="2009" name="PLoS Genet.">
        <title>Organised genome dynamics in the Escherichia coli species results in highly diverse adaptive paths.</title>
        <authorList>
            <person name="Touchon M."/>
            <person name="Hoede C."/>
            <person name="Tenaillon O."/>
            <person name="Barbe V."/>
            <person name="Baeriswyl S."/>
            <person name="Bidet P."/>
            <person name="Bingen E."/>
            <person name="Bonacorsi S."/>
            <person name="Bouchier C."/>
            <person name="Bouvet O."/>
            <person name="Calteau A."/>
            <person name="Chiapello H."/>
            <person name="Clermont O."/>
            <person name="Cruveiller S."/>
            <person name="Danchin A."/>
            <person name="Diard M."/>
            <person name="Dossat C."/>
            <person name="Karoui M.E."/>
            <person name="Frapy E."/>
            <person name="Garry L."/>
            <person name="Ghigo J.M."/>
            <person name="Gilles A.M."/>
            <person name="Johnson J."/>
            <person name="Le Bouguenec C."/>
            <person name="Lescat M."/>
            <person name="Mangenot S."/>
            <person name="Martinez-Jehanne V."/>
            <person name="Matic I."/>
            <person name="Nassif X."/>
            <person name="Oztas S."/>
            <person name="Petit M.A."/>
            <person name="Pichon C."/>
            <person name="Rouy Z."/>
            <person name="Ruf C.S."/>
            <person name="Schneider D."/>
            <person name="Tourret J."/>
            <person name="Vacherie B."/>
            <person name="Vallenet D."/>
            <person name="Medigue C."/>
            <person name="Rocha E.P.C."/>
            <person name="Denamur E."/>
        </authorList>
    </citation>
    <scope>NUCLEOTIDE SEQUENCE [LARGE SCALE GENOMIC DNA]</scope>
    <source>
        <strain>ED1a</strain>
    </source>
</reference>
<protein>
    <recommendedName>
        <fullName evidence="1">Protein/nucleic acid deglycase HchA</fullName>
        <ecNumber evidence="1">3.1.2.-</ecNumber>
        <ecNumber evidence="1">3.5.1.-</ecNumber>
        <ecNumber evidence="1">3.5.1.124</ecNumber>
    </recommendedName>
    <alternativeName>
        <fullName evidence="1">Maillard deglycase</fullName>
    </alternativeName>
</protein>
<gene>
    <name evidence="1" type="primary">hchA</name>
    <name type="ordered locus">ECED1_2232</name>
</gene>
<sequence>MTVQTSKNPQVDIAEDNAFFPSEYSLSQYTSPVSDLDGVDYPKPYRGKHKILVIAADERYLPTDNGKLFSTGNHPIETLLPLYHLHAAGFEFEVATISGLMTKFEYWAMPHKDEKVMPFFEQHKSLFRNPKKLADVVASLNADSEYAAIFVPGGHGALIGLPESQDVAAALQWAIKNDRFVISLCHGPAAFLALRHGDNPLNGYSICAFPDAADKQTPEIGYMPGHLTWYFGEELKKMGMNIINDDITGRVHKDRKVLTGDSPFAANALGKLAAQEMLAAYAG</sequence>
<evidence type="ECO:0000255" key="1">
    <source>
        <dbReference type="HAMAP-Rule" id="MF_01046"/>
    </source>
</evidence>
<accession>B7MWF3</accession>
<name>HCHA_ECO81</name>
<organism>
    <name type="scientific">Escherichia coli O81 (strain ED1a)</name>
    <dbReference type="NCBI Taxonomy" id="585397"/>
    <lineage>
        <taxon>Bacteria</taxon>
        <taxon>Pseudomonadati</taxon>
        <taxon>Pseudomonadota</taxon>
        <taxon>Gammaproteobacteria</taxon>
        <taxon>Enterobacterales</taxon>
        <taxon>Enterobacteriaceae</taxon>
        <taxon>Escherichia</taxon>
    </lineage>
</organism>
<keyword id="KW-0963">Cytoplasm</keyword>
<keyword id="KW-0227">DNA damage</keyword>
<keyword id="KW-0234">DNA repair</keyword>
<keyword id="KW-0378">Hydrolase</keyword>
<keyword id="KW-0479">Metal-binding</keyword>
<keyword id="KW-0346">Stress response</keyword>
<keyword id="KW-0862">Zinc</keyword>
<proteinExistence type="inferred from homology"/>
<comment type="function">
    <text evidence="1">Protein and nucleotide deglycase that catalyzes the deglycation of the Maillard adducts formed between amino groups of proteins or nucleotides and reactive carbonyl groups of glyoxals. Thus, functions as a protein deglycase that repairs methylglyoxal- and glyoxal-glycated proteins, and releases repaired proteins and lactate or glycolate, respectively. Deglycates cysteine, arginine and lysine residues in proteins, and thus reactivates these proteins by reversing glycation by glyoxals. Acts on early glycation intermediates (hemithioacetals and aminocarbinols), preventing the formation of Schiff bases and advanced glycation endproducts (AGE). Also functions as a nucleotide deglycase able to repair glycated guanine in the free nucleotide pool (GTP, GDP, GMP, dGTP) and in DNA and RNA. Is thus involved in a major nucleotide repair system named guanine glycation repair (GG repair), dedicated to reversing methylglyoxal and glyoxal damage via nucleotide sanitization and direct nucleic acid repair. Plays an important role in protecting cells from carbonyl stress.</text>
</comment>
<comment type="catalytic activity">
    <reaction evidence="1">
        <text>N(omega)-(1-hydroxy-2-oxopropyl)-L-arginyl-[protein] + H2O = lactate + L-arginyl-[protein] + H(+)</text>
        <dbReference type="Rhea" id="RHEA:49548"/>
        <dbReference type="Rhea" id="RHEA-COMP:10532"/>
        <dbReference type="Rhea" id="RHEA-COMP:12428"/>
        <dbReference type="ChEBI" id="CHEBI:15377"/>
        <dbReference type="ChEBI" id="CHEBI:15378"/>
        <dbReference type="ChEBI" id="CHEBI:24996"/>
        <dbReference type="ChEBI" id="CHEBI:29965"/>
        <dbReference type="ChEBI" id="CHEBI:131708"/>
        <dbReference type="EC" id="3.5.1.124"/>
    </reaction>
</comment>
<comment type="catalytic activity">
    <reaction evidence="1">
        <text>N(6)-(1-hydroxy-2-oxopropyl)-L-lysyl-[protein] + H2O = lactate + L-lysyl-[protein] + H(+)</text>
        <dbReference type="Rhea" id="RHEA:49552"/>
        <dbReference type="Rhea" id="RHEA-COMP:9752"/>
        <dbReference type="Rhea" id="RHEA-COMP:12429"/>
        <dbReference type="ChEBI" id="CHEBI:15377"/>
        <dbReference type="ChEBI" id="CHEBI:15378"/>
        <dbReference type="ChEBI" id="CHEBI:24996"/>
        <dbReference type="ChEBI" id="CHEBI:29969"/>
        <dbReference type="ChEBI" id="CHEBI:131709"/>
        <dbReference type="EC" id="3.5.1.124"/>
    </reaction>
</comment>
<comment type="catalytic activity">
    <reaction evidence="1">
        <text>S-(1-hydroxy-2-oxopropyl)-L-cysteinyl-[protein] + H2O = lactate + L-cysteinyl-[protein] + H(+)</text>
        <dbReference type="Rhea" id="RHEA:49556"/>
        <dbReference type="Rhea" id="RHEA-COMP:10131"/>
        <dbReference type="Rhea" id="RHEA-COMP:12430"/>
        <dbReference type="ChEBI" id="CHEBI:15377"/>
        <dbReference type="ChEBI" id="CHEBI:15378"/>
        <dbReference type="ChEBI" id="CHEBI:24996"/>
        <dbReference type="ChEBI" id="CHEBI:29950"/>
        <dbReference type="ChEBI" id="CHEBI:131710"/>
        <dbReference type="EC" id="3.5.1.124"/>
    </reaction>
</comment>
<comment type="catalytic activity">
    <reaction evidence="1">
        <text>N(omega)-(1-hydroxy-2-oxoethyl)-L-arginyl-[protein] + H2O = L-arginyl-[protein] + glycolate + H(+)</text>
        <dbReference type="Rhea" id="RHEA:57188"/>
        <dbReference type="Rhea" id="RHEA-COMP:10532"/>
        <dbReference type="Rhea" id="RHEA-COMP:14844"/>
        <dbReference type="ChEBI" id="CHEBI:15377"/>
        <dbReference type="ChEBI" id="CHEBI:15378"/>
        <dbReference type="ChEBI" id="CHEBI:29805"/>
        <dbReference type="ChEBI" id="CHEBI:29965"/>
        <dbReference type="ChEBI" id="CHEBI:141553"/>
        <dbReference type="EC" id="3.5.1.124"/>
    </reaction>
</comment>
<comment type="catalytic activity">
    <reaction evidence="1">
        <text>N(6)-(1-hydroxy-2-oxoethyl)-L-lysyl-[protein] + H2O = glycolate + L-lysyl-[protein] + H(+)</text>
        <dbReference type="Rhea" id="RHEA:57192"/>
        <dbReference type="Rhea" id="RHEA-COMP:9752"/>
        <dbReference type="Rhea" id="RHEA-COMP:14845"/>
        <dbReference type="ChEBI" id="CHEBI:15377"/>
        <dbReference type="ChEBI" id="CHEBI:15378"/>
        <dbReference type="ChEBI" id="CHEBI:29805"/>
        <dbReference type="ChEBI" id="CHEBI:29969"/>
        <dbReference type="ChEBI" id="CHEBI:141554"/>
        <dbReference type="EC" id="3.5.1.124"/>
    </reaction>
</comment>
<comment type="catalytic activity">
    <reaction evidence="1">
        <text>S-(1-hydroxy-2-oxoethyl)-L-cysteinyl-[protein] + H2O = glycolate + L-cysteinyl-[protein] + H(+)</text>
        <dbReference type="Rhea" id="RHEA:57196"/>
        <dbReference type="Rhea" id="RHEA-COMP:10131"/>
        <dbReference type="Rhea" id="RHEA-COMP:14846"/>
        <dbReference type="ChEBI" id="CHEBI:15377"/>
        <dbReference type="ChEBI" id="CHEBI:15378"/>
        <dbReference type="ChEBI" id="CHEBI:29805"/>
        <dbReference type="ChEBI" id="CHEBI:29950"/>
        <dbReference type="ChEBI" id="CHEBI:141555"/>
        <dbReference type="EC" id="3.5.1.124"/>
    </reaction>
</comment>
<comment type="catalytic activity">
    <reaction evidence="1">
        <text>N(2)-(1-hydroxy-2-oxopropyl)-dGTP + H2O = lactate + dGTP + H(+)</text>
        <dbReference type="Rhea" id="RHEA:57244"/>
        <dbReference type="ChEBI" id="CHEBI:15377"/>
        <dbReference type="ChEBI" id="CHEBI:15378"/>
        <dbReference type="ChEBI" id="CHEBI:24996"/>
        <dbReference type="ChEBI" id="CHEBI:61429"/>
        <dbReference type="ChEBI" id="CHEBI:141569"/>
    </reaction>
</comment>
<comment type="catalytic activity">
    <reaction evidence="1">
        <text>N(2)-(1-hydroxy-2-oxopropyl)-GTP + H2O = lactate + GTP + H(+)</text>
        <dbReference type="Rhea" id="RHEA:57256"/>
        <dbReference type="ChEBI" id="CHEBI:15377"/>
        <dbReference type="ChEBI" id="CHEBI:15378"/>
        <dbReference type="ChEBI" id="CHEBI:24996"/>
        <dbReference type="ChEBI" id="CHEBI:37565"/>
        <dbReference type="ChEBI" id="CHEBI:141570"/>
    </reaction>
</comment>
<comment type="catalytic activity">
    <reaction evidence="1">
        <text>N(2)-(1-hydroxy-2-oxopropyl)-GDP + H2O = lactate + GDP + H(+)</text>
        <dbReference type="Rhea" id="RHEA:57260"/>
        <dbReference type="ChEBI" id="CHEBI:15377"/>
        <dbReference type="ChEBI" id="CHEBI:15378"/>
        <dbReference type="ChEBI" id="CHEBI:24996"/>
        <dbReference type="ChEBI" id="CHEBI:58189"/>
        <dbReference type="ChEBI" id="CHEBI:141573"/>
    </reaction>
</comment>
<comment type="catalytic activity">
    <reaction evidence="1">
        <text>N(2)-(1-hydroxy-2-oxopropyl)-GMP + H2O = lactate + GMP + H(+)</text>
        <dbReference type="Rhea" id="RHEA:57268"/>
        <dbReference type="ChEBI" id="CHEBI:15377"/>
        <dbReference type="ChEBI" id="CHEBI:15378"/>
        <dbReference type="ChEBI" id="CHEBI:24996"/>
        <dbReference type="ChEBI" id="CHEBI:58115"/>
        <dbReference type="ChEBI" id="CHEBI:141575"/>
    </reaction>
</comment>
<comment type="catalytic activity">
    <reaction evidence="1">
        <text>N(2)-(1-hydroxy-2-oxoethyl)-dGTP + H2O = dGTP + glycolate + H(+)</text>
        <dbReference type="Rhea" id="RHEA:57248"/>
        <dbReference type="ChEBI" id="CHEBI:15377"/>
        <dbReference type="ChEBI" id="CHEBI:15378"/>
        <dbReference type="ChEBI" id="CHEBI:29805"/>
        <dbReference type="ChEBI" id="CHEBI:61429"/>
        <dbReference type="ChEBI" id="CHEBI:141572"/>
    </reaction>
</comment>
<comment type="catalytic activity">
    <reaction evidence="1">
        <text>N(2)-(1-hydroxy-2-oxoethyl)-GTP + H2O = glycolate + GTP + H(+)</text>
        <dbReference type="Rhea" id="RHEA:57252"/>
        <dbReference type="ChEBI" id="CHEBI:15377"/>
        <dbReference type="ChEBI" id="CHEBI:15378"/>
        <dbReference type="ChEBI" id="CHEBI:29805"/>
        <dbReference type="ChEBI" id="CHEBI:37565"/>
        <dbReference type="ChEBI" id="CHEBI:141571"/>
    </reaction>
</comment>
<comment type="catalytic activity">
    <reaction evidence="1">
        <text>N(2)-(1-hydroxy-2-oxoethyl)-GDP + H2O = glycolate + GDP + H(+)</text>
        <dbReference type="Rhea" id="RHEA:57264"/>
        <dbReference type="ChEBI" id="CHEBI:15377"/>
        <dbReference type="ChEBI" id="CHEBI:15378"/>
        <dbReference type="ChEBI" id="CHEBI:29805"/>
        <dbReference type="ChEBI" id="CHEBI:58189"/>
        <dbReference type="ChEBI" id="CHEBI:141574"/>
    </reaction>
</comment>
<comment type="catalytic activity">
    <reaction evidence="1">
        <text>N(2)-(1-hydroxy-2-oxoethyl)-GMP + H2O = glycolate + GMP + H(+)</text>
        <dbReference type="Rhea" id="RHEA:57304"/>
        <dbReference type="ChEBI" id="CHEBI:15377"/>
        <dbReference type="ChEBI" id="CHEBI:15378"/>
        <dbReference type="ChEBI" id="CHEBI:29805"/>
        <dbReference type="ChEBI" id="CHEBI:58115"/>
        <dbReference type="ChEBI" id="CHEBI:141576"/>
    </reaction>
</comment>
<comment type="catalytic activity">
    <reaction evidence="1">
        <text>an N(2)-(1-hydroxy-2-oxopropyl)-guanosine in RNA + H2O = a guanosine in RNA + lactate + H(+)</text>
        <dbReference type="Rhea" id="RHEA:57288"/>
        <dbReference type="Rhea" id="RHEA-COMP:14855"/>
        <dbReference type="Rhea" id="RHEA-COMP:14858"/>
        <dbReference type="ChEBI" id="CHEBI:15377"/>
        <dbReference type="ChEBI" id="CHEBI:15378"/>
        <dbReference type="ChEBI" id="CHEBI:24996"/>
        <dbReference type="ChEBI" id="CHEBI:74269"/>
        <dbReference type="ChEBI" id="CHEBI:141580"/>
    </reaction>
</comment>
<comment type="catalytic activity">
    <reaction evidence="1">
        <text>an N(2)-(1-hydroxy-2-oxopropyl)-2'-deoxyguanosine in DNA + H2O = a 2'-deoxyguanosine in DNA + lactate + H(+)</text>
        <dbReference type="Rhea" id="RHEA:57300"/>
        <dbReference type="Rhea" id="RHEA-COMP:11367"/>
        <dbReference type="Rhea" id="RHEA-COMP:14856"/>
        <dbReference type="ChEBI" id="CHEBI:15377"/>
        <dbReference type="ChEBI" id="CHEBI:15378"/>
        <dbReference type="ChEBI" id="CHEBI:24996"/>
        <dbReference type="ChEBI" id="CHEBI:85445"/>
        <dbReference type="ChEBI" id="CHEBI:141578"/>
    </reaction>
</comment>
<comment type="catalytic activity">
    <reaction evidence="1">
        <text>an N(2)-(1-hydroxy-2-oxoethyl)-guanosine in RNA + H2O = a guanosine in RNA + glycolate + H(+)</text>
        <dbReference type="Rhea" id="RHEA:57292"/>
        <dbReference type="Rhea" id="RHEA-COMP:14855"/>
        <dbReference type="Rhea" id="RHEA-COMP:14859"/>
        <dbReference type="ChEBI" id="CHEBI:15377"/>
        <dbReference type="ChEBI" id="CHEBI:15378"/>
        <dbReference type="ChEBI" id="CHEBI:29805"/>
        <dbReference type="ChEBI" id="CHEBI:74269"/>
        <dbReference type="ChEBI" id="CHEBI:141581"/>
    </reaction>
</comment>
<comment type="catalytic activity">
    <reaction evidence="1">
        <text>an N(2)-(1-hydroxy-2-oxoethyl)-2'-deoxyguanosine in DNA + H2O = a 2'-deoxyguanosine in DNA + glycolate + H(+)</text>
        <dbReference type="Rhea" id="RHEA:57296"/>
        <dbReference type="Rhea" id="RHEA-COMP:11367"/>
        <dbReference type="Rhea" id="RHEA-COMP:14857"/>
        <dbReference type="ChEBI" id="CHEBI:15377"/>
        <dbReference type="ChEBI" id="CHEBI:15378"/>
        <dbReference type="ChEBI" id="CHEBI:29805"/>
        <dbReference type="ChEBI" id="CHEBI:85445"/>
        <dbReference type="ChEBI" id="CHEBI:141579"/>
    </reaction>
</comment>
<comment type="subunit">
    <text evidence="1">Homodimer.</text>
</comment>
<comment type="subcellular location">
    <subcellularLocation>
        <location evidence="1">Cytoplasm</location>
    </subcellularLocation>
</comment>
<comment type="induction">
    <text evidence="1">By heat shock.</text>
</comment>
<comment type="similarity">
    <text evidence="1">Belongs to the peptidase C56 family. HchA subfamily.</text>
</comment>